<dbReference type="EMBL" id="AC108519">
    <property type="status" value="NOT_ANNOTATED_CDS"/>
    <property type="molecule type" value="Genomic_DNA"/>
</dbReference>
<dbReference type="SMR" id="D6RBM5"/>
<dbReference type="STRING" id="9606.ENSP00000424077"/>
<dbReference type="MEROPS" id="C19.987"/>
<dbReference type="BioMuta" id="USP17L23"/>
<dbReference type="PaxDb" id="9606-ENSP00000424077"/>
<dbReference type="Ensembl" id="ENST00000506619.2">
    <property type="protein sequence ID" value="ENSP00000424077.2"/>
    <property type="gene ID" value="ENSG00000250913.2"/>
</dbReference>
<dbReference type="UCSC" id="uc062vda.1">
    <property type="organism name" value="human"/>
</dbReference>
<dbReference type="AGR" id="HGNC:44451"/>
<dbReference type="GeneCards" id="USP17L23"/>
<dbReference type="HGNC" id="HGNC:44451">
    <property type="gene designation" value="USP17L23"/>
</dbReference>
<dbReference type="HPA" id="ENSG00000250913">
    <property type="expression patterns" value="Not detected"/>
</dbReference>
<dbReference type="neXtProt" id="NX_D6RBM5"/>
<dbReference type="VEuPathDB" id="HostDB:ENSG00000250913"/>
<dbReference type="eggNOG" id="KOG1865">
    <property type="taxonomic scope" value="Eukaryota"/>
</dbReference>
<dbReference type="GeneTree" id="ENSGT00940000161948"/>
<dbReference type="HOGENOM" id="CLU_1261126_0_0_1"/>
<dbReference type="InParanoid" id="D6RBM5"/>
<dbReference type="OMA" id="CIMETHV"/>
<dbReference type="PAN-GO" id="D6RBM5">
    <property type="GO annotations" value="0 GO annotations based on evolutionary models"/>
</dbReference>
<dbReference type="PhylomeDB" id="D6RBM5"/>
<dbReference type="Pharos" id="D6RBM5">
    <property type="development level" value="Tdark"/>
</dbReference>
<dbReference type="Proteomes" id="UP000005640">
    <property type="component" value="Chromosome 4"/>
</dbReference>
<dbReference type="RNAct" id="D6RBM5">
    <property type="molecule type" value="protein"/>
</dbReference>
<dbReference type="Bgee" id="ENSG00000250913">
    <property type="expression patterns" value="Expressed in male germ line stem cell (sensu Vertebrata) in testis and 25 other cell types or tissues"/>
</dbReference>
<dbReference type="GO" id="GO:0005783">
    <property type="term" value="C:endoplasmic reticulum"/>
    <property type="evidence" value="ECO:0007669"/>
    <property type="project" value="UniProtKB-SubCell"/>
</dbReference>
<dbReference type="GO" id="GO:0005634">
    <property type="term" value="C:nucleus"/>
    <property type="evidence" value="ECO:0007669"/>
    <property type="project" value="UniProtKB-SubCell"/>
</dbReference>
<dbReference type="GO" id="GO:0004843">
    <property type="term" value="F:cysteine-type deubiquitinase activity"/>
    <property type="evidence" value="ECO:0007669"/>
    <property type="project" value="InterPro"/>
</dbReference>
<dbReference type="GO" id="GO:0016579">
    <property type="term" value="P:protein deubiquitination"/>
    <property type="evidence" value="ECO:0007669"/>
    <property type="project" value="InterPro"/>
</dbReference>
<dbReference type="FunFam" id="3.90.70.10:FF:000119">
    <property type="entry name" value="Ubiquitin specific peptidase 36"/>
    <property type="match status" value="1"/>
</dbReference>
<dbReference type="Gene3D" id="3.90.70.10">
    <property type="entry name" value="Cysteine proteinases"/>
    <property type="match status" value="1"/>
</dbReference>
<dbReference type="InterPro" id="IPR038765">
    <property type="entry name" value="Papain-like_cys_pep_sf"/>
</dbReference>
<dbReference type="InterPro" id="IPR050164">
    <property type="entry name" value="Peptidase_C19"/>
</dbReference>
<dbReference type="InterPro" id="IPR001394">
    <property type="entry name" value="Peptidase_C19_UCH"/>
</dbReference>
<dbReference type="InterPro" id="IPR018200">
    <property type="entry name" value="USP_CS"/>
</dbReference>
<dbReference type="InterPro" id="IPR028889">
    <property type="entry name" value="USP_dom"/>
</dbReference>
<dbReference type="PANTHER" id="PTHR24006:SF651">
    <property type="entry name" value="INACTIVE UBIQUITIN CARBOXYL-TERMINAL HYDROLASE 17-LIKE PROTEIN 4-RELATED"/>
    <property type="match status" value="1"/>
</dbReference>
<dbReference type="PANTHER" id="PTHR24006">
    <property type="entry name" value="UBIQUITIN CARBOXYL-TERMINAL HYDROLASE"/>
    <property type="match status" value="1"/>
</dbReference>
<dbReference type="Pfam" id="PF00443">
    <property type="entry name" value="UCH"/>
    <property type="match status" value="1"/>
</dbReference>
<dbReference type="SUPFAM" id="SSF54001">
    <property type="entry name" value="Cysteine proteinases"/>
    <property type="match status" value="1"/>
</dbReference>
<dbReference type="PROSITE" id="PS00972">
    <property type="entry name" value="USP_1"/>
    <property type="match status" value="1"/>
</dbReference>
<dbReference type="PROSITE" id="PS50235">
    <property type="entry name" value="USP_3"/>
    <property type="match status" value="1"/>
</dbReference>
<sequence>MEDDSLYLGGEWQFNHFSKLTSSRPDAAFAEIQRTSLPEKSPLSCETRVDLCDDLAPVARQLAPREKLPLSSRRPAAVGAGLQNMGNTCYVNASLQCLTYTPPLANYMLSREHSQTCHRHKGCMLCTMQAHITRALHNPGHVIQPSQALAAGFHRGKQEDAHEFLMFTVDAMEKACLPGHKQV</sequence>
<feature type="chain" id="PRO_0000421097" description="Ubiquitin carboxyl-terminal hydrolase 17-like protein 23">
    <location>
        <begin position="1"/>
        <end position="183"/>
    </location>
</feature>
<feature type="domain" description="USP">
    <location>
        <begin position="80"/>
        <end position="183"/>
    </location>
</feature>
<feature type="non-terminal residue">
    <location>
        <position position="183"/>
    </location>
</feature>
<gene>
    <name type="primary">USP17L23</name>
</gene>
<reference key="1">
    <citation type="journal article" date="2005" name="Nature">
        <title>Generation and annotation of the DNA sequences of human chromosomes 2 and 4.</title>
        <authorList>
            <person name="Hillier L.W."/>
            <person name="Graves T.A."/>
            <person name="Fulton R.S."/>
            <person name="Fulton L.A."/>
            <person name="Pepin K.H."/>
            <person name="Minx P."/>
            <person name="Wagner-McPherson C."/>
            <person name="Layman D."/>
            <person name="Wylie K."/>
            <person name="Sekhon M."/>
            <person name="Becker M.C."/>
            <person name="Fewell G.A."/>
            <person name="Delehaunty K.D."/>
            <person name="Miner T.L."/>
            <person name="Nash W.E."/>
            <person name="Kremitzki C."/>
            <person name="Oddy L."/>
            <person name="Du H."/>
            <person name="Sun H."/>
            <person name="Bradshaw-Cordum H."/>
            <person name="Ali J."/>
            <person name="Carter J."/>
            <person name="Cordes M."/>
            <person name="Harris A."/>
            <person name="Isak A."/>
            <person name="van Brunt A."/>
            <person name="Nguyen C."/>
            <person name="Du F."/>
            <person name="Courtney L."/>
            <person name="Kalicki J."/>
            <person name="Ozersky P."/>
            <person name="Abbott S."/>
            <person name="Armstrong J."/>
            <person name="Belter E.A."/>
            <person name="Caruso L."/>
            <person name="Cedroni M."/>
            <person name="Cotton M."/>
            <person name="Davidson T."/>
            <person name="Desai A."/>
            <person name="Elliott G."/>
            <person name="Erb T."/>
            <person name="Fronick C."/>
            <person name="Gaige T."/>
            <person name="Haakenson W."/>
            <person name="Haglund K."/>
            <person name="Holmes A."/>
            <person name="Harkins R."/>
            <person name="Kim K."/>
            <person name="Kruchowski S.S."/>
            <person name="Strong C.M."/>
            <person name="Grewal N."/>
            <person name="Goyea E."/>
            <person name="Hou S."/>
            <person name="Levy A."/>
            <person name="Martinka S."/>
            <person name="Mead K."/>
            <person name="McLellan M.D."/>
            <person name="Meyer R."/>
            <person name="Randall-Maher J."/>
            <person name="Tomlinson C."/>
            <person name="Dauphin-Kohlberg S."/>
            <person name="Kozlowicz-Reilly A."/>
            <person name="Shah N."/>
            <person name="Swearengen-Shahid S."/>
            <person name="Snider J."/>
            <person name="Strong J.T."/>
            <person name="Thompson J."/>
            <person name="Yoakum M."/>
            <person name="Leonard S."/>
            <person name="Pearman C."/>
            <person name="Trani L."/>
            <person name="Radionenko M."/>
            <person name="Waligorski J.E."/>
            <person name="Wang C."/>
            <person name="Rock S.M."/>
            <person name="Tin-Wollam A.-M."/>
            <person name="Maupin R."/>
            <person name="Latreille P."/>
            <person name="Wendl M.C."/>
            <person name="Yang S.-P."/>
            <person name="Pohl C."/>
            <person name="Wallis J.W."/>
            <person name="Spieth J."/>
            <person name="Bieri T.A."/>
            <person name="Berkowicz N."/>
            <person name="Nelson J.O."/>
            <person name="Osborne J."/>
            <person name="Ding L."/>
            <person name="Meyer R."/>
            <person name="Sabo A."/>
            <person name="Shotland Y."/>
            <person name="Sinha P."/>
            <person name="Wohldmann P.E."/>
            <person name="Cook L.L."/>
            <person name="Hickenbotham M.T."/>
            <person name="Eldred J."/>
            <person name="Williams D."/>
            <person name="Jones T.A."/>
            <person name="She X."/>
            <person name="Ciccarelli F.D."/>
            <person name="Izaurralde E."/>
            <person name="Taylor J."/>
            <person name="Schmutz J."/>
            <person name="Myers R.M."/>
            <person name="Cox D.R."/>
            <person name="Huang X."/>
            <person name="McPherson J.D."/>
            <person name="Mardis E.R."/>
            <person name="Clifton S.W."/>
            <person name="Warren W.C."/>
            <person name="Chinwalla A.T."/>
            <person name="Eddy S.R."/>
            <person name="Marra M.A."/>
            <person name="Ovcharenko I."/>
            <person name="Furey T.S."/>
            <person name="Miller W."/>
            <person name="Eichler E.E."/>
            <person name="Bork P."/>
            <person name="Suyama M."/>
            <person name="Torrents D."/>
            <person name="Waterston R.H."/>
            <person name="Wilson R.K."/>
        </authorList>
    </citation>
    <scope>NUCLEOTIDE SEQUENCE [LARGE SCALE GENOMIC DNA]</scope>
</reference>
<organism>
    <name type="scientific">Homo sapiens</name>
    <name type="common">Human</name>
    <dbReference type="NCBI Taxonomy" id="9606"/>
    <lineage>
        <taxon>Eukaryota</taxon>
        <taxon>Metazoa</taxon>
        <taxon>Chordata</taxon>
        <taxon>Craniata</taxon>
        <taxon>Vertebrata</taxon>
        <taxon>Euteleostomi</taxon>
        <taxon>Mammalia</taxon>
        <taxon>Eutheria</taxon>
        <taxon>Euarchontoglires</taxon>
        <taxon>Primates</taxon>
        <taxon>Haplorrhini</taxon>
        <taxon>Catarrhini</taxon>
        <taxon>Hominidae</taxon>
        <taxon>Homo</taxon>
    </lineage>
</organism>
<comment type="subcellular location">
    <subcellularLocation>
        <location evidence="1">Nucleus</location>
    </subcellularLocation>
    <subcellularLocation>
        <location evidence="1">Endoplasmic reticulum</location>
    </subcellularLocation>
</comment>
<comment type="similarity">
    <text evidence="2">Belongs to the peptidase C19 family. USP17 subfamily.</text>
</comment>
<comment type="caution">
    <text evidence="2">The RS447 megasatellite DNA is a highly polymorphic conserved tandem repetitive sequence which contains a copy of USP17. It is present with an interindividual variation in copy number and between 20 to 103 copies can be found on chromosome 4 and chromosome 8.</text>
</comment>
<keyword id="KW-0256">Endoplasmic reticulum</keyword>
<keyword id="KW-0539">Nucleus</keyword>
<keyword id="KW-1185">Reference proteome</keyword>
<proteinExistence type="inferred from homology"/>
<name>U17LN_HUMAN</name>
<accession>D6RBM5</accession>
<evidence type="ECO:0000250" key="1"/>
<evidence type="ECO:0000305" key="2"/>
<protein>
    <recommendedName>
        <fullName>Ubiquitin carboxyl-terminal hydrolase 17-like protein 23</fullName>
    </recommendedName>
</protein>